<keyword id="KW-0963">Cytoplasm</keyword>
<keyword id="KW-0350">Heme biosynthesis</keyword>
<keyword id="KW-0408">Iron</keyword>
<keyword id="KW-0456">Lyase</keyword>
<keyword id="KW-0479">Metal-binding</keyword>
<keyword id="KW-0627">Porphyrin biosynthesis</keyword>
<keyword id="KW-1185">Reference proteome</keyword>
<comment type="function">
    <text evidence="1">Catalyzes the ferrous insertion into protoporphyrin IX.</text>
</comment>
<comment type="catalytic activity">
    <reaction evidence="1">
        <text>heme b + 2 H(+) = protoporphyrin IX + Fe(2+)</text>
        <dbReference type="Rhea" id="RHEA:22584"/>
        <dbReference type="ChEBI" id="CHEBI:15378"/>
        <dbReference type="ChEBI" id="CHEBI:29033"/>
        <dbReference type="ChEBI" id="CHEBI:57306"/>
        <dbReference type="ChEBI" id="CHEBI:60344"/>
        <dbReference type="EC" id="4.98.1.1"/>
    </reaction>
</comment>
<comment type="pathway">
    <text evidence="1">Porphyrin-containing compound metabolism; protoheme biosynthesis; protoheme from protoporphyrin-IX: step 1/1.</text>
</comment>
<comment type="subcellular location">
    <subcellularLocation>
        <location evidence="1">Cytoplasm</location>
    </subcellularLocation>
</comment>
<comment type="similarity">
    <text evidence="1">Belongs to the ferrochelatase family.</text>
</comment>
<accession>Q1QI02</accession>
<proteinExistence type="inferred from homology"/>
<sequence length="345" mass="38371">MTVVIPIGRGRSPAGASRERVGVLLVNLGTPDTADARGLRVYLKEFLSDPRVIEKQGLVWKLALNGVILNTRPRRKARDYLKIWNTEQNESPLKTITRAQSDKLAAAIADHGHVVVDWAMRYGNPSMRSRIAALTAQGCDRLLVVPLYPQYSAATSATVCDEAFRVLGEMRAQPTLRVTPPYYDDPDYIDALAVSIERHLASLSFTPEIIMASFHGMPQAYIDKGDPYQAQCAATTEALRKRMGLDASKLMLTFQSRFGFDQWLQPYTDKTVEKLAKDGVKRLAVVTPGFSADCLETLEEIAQENAEIFRHNGGEEFSAIPCLNDSDSGMDVIRKLVLRELQGWI</sequence>
<organism>
    <name type="scientific">Nitrobacter hamburgensis (strain DSM 10229 / NCIMB 13809 / X14)</name>
    <dbReference type="NCBI Taxonomy" id="323097"/>
    <lineage>
        <taxon>Bacteria</taxon>
        <taxon>Pseudomonadati</taxon>
        <taxon>Pseudomonadota</taxon>
        <taxon>Alphaproteobacteria</taxon>
        <taxon>Hyphomicrobiales</taxon>
        <taxon>Nitrobacteraceae</taxon>
        <taxon>Nitrobacter</taxon>
    </lineage>
</organism>
<dbReference type="EC" id="4.98.1.1" evidence="1"/>
<dbReference type="EMBL" id="CP000319">
    <property type="protein sequence ID" value="ABE64145.1"/>
    <property type="molecule type" value="Genomic_DNA"/>
</dbReference>
<dbReference type="RefSeq" id="WP_011511796.1">
    <property type="nucleotide sequence ID" value="NC_007964.1"/>
</dbReference>
<dbReference type="SMR" id="Q1QI02"/>
<dbReference type="STRING" id="323097.Nham_3415"/>
<dbReference type="KEGG" id="nha:Nham_3415"/>
<dbReference type="eggNOG" id="COG0276">
    <property type="taxonomic scope" value="Bacteria"/>
</dbReference>
<dbReference type="HOGENOM" id="CLU_018884_0_0_5"/>
<dbReference type="OrthoDB" id="9809741at2"/>
<dbReference type="UniPathway" id="UPA00252">
    <property type="reaction ID" value="UER00325"/>
</dbReference>
<dbReference type="Proteomes" id="UP000001953">
    <property type="component" value="Chromosome"/>
</dbReference>
<dbReference type="GO" id="GO:0005737">
    <property type="term" value="C:cytoplasm"/>
    <property type="evidence" value="ECO:0007669"/>
    <property type="project" value="UniProtKB-SubCell"/>
</dbReference>
<dbReference type="GO" id="GO:0004325">
    <property type="term" value="F:ferrochelatase activity"/>
    <property type="evidence" value="ECO:0007669"/>
    <property type="project" value="UniProtKB-UniRule"/>
</dbReference>
<dbReference type="GO" id="GO:0046872">
    <property type="term" value="F:metal ion binding"/>
    <property type="evidence" value="ECO:0007669"/>
    <property type="project" value="UniProtKB-KW"/>
</dbReference>
<dbReference type="GO" id="GO:0006783">
    <property type="term" value="P:heme biosynthetic process"/>
    <property type="evidence" value="ECO:0007669"/>
    <property type="project" value="UniProtKB-UniRule"/>
</dbReference>
<dbReference type="CDD" id="cd00419">
    <property type="entry name" value="Ferrochelatase_C"/>
    <property type="match status" value="1"/>
</dbReference>
<dbReference type="CDD" id="cd03411">
    <property type="entry name" value="Ferrochelatase_N"/>
    <property type="match status" value="1"/>
</dbReference>
<dbReference type="FunFam" id="3.40.50.1400:FF:000002">
    <property type="entry name" value="Ferrochelatase"/>
    <property type="match status" value="1"/>
</dbReference>
<dbReference type="Gene3D" id="3.40.50.1400">
    <property type="match status" value="2"/>
</dbReference>
<dbReference type="HAMAP" id="MF_00323">
    <property type="entry name" value="Ferrochelatase"/>
    <property type="match status" value="1"/>
</dbReference>
<dbReference type="InterPro" id="IPR001015">
    <property type="entry name" value="Ferrochelatase"/>
</dbReference>
<dbReference type="InterPro" id="IPR019772">
    <property type="entry name" value="Ferrochelatase_AS"/>
</dbReference>
<dbReference type="InterPro" id="IPR033644">
    <property type="entry name" value="Ferrochelatase_C"/>
</dbReference>
<dbReference type="InterPro" id="IPR033659">
    <property type="entry name" value="Ferrochelatase_N"/>
</dbReference>
<dbReference type="NCBIfam" id="TIGR00109">
    <property type="entry name" value="hemH"/>
    <property type="match status" value="1"/>
</dbReference>
<dbReference type="PANTHER" id="PTHR11108">
    <property type="entry name" value="FERROCHELATASE"/>
    <property type="match status" value="1"/>
</dbReference>
<dbReference type="PANTHER" id="PTHR11108:SF1">
    <property type="entry name" value="FERROCHELATASE, MITOCHONDRIAL"/>
    <property type="match status" value="1"/>
</dbReference>
<dbReference type="Pfam" id="PF00762">
    <property type="entry name" value="Ferrochelatase"/>
    <property type="match status" value="1"/>
</dbReference>
<dbReference type="SUPFAM" id="SSF53800">
    <property type="entry name" value="Chelatase"/>
    <property type="match status" value="1"/>
</dbReference>
<dbReference type="PROSITE" id="PS00534">
    <property type="entry name" value="FERROCHELATASE"/>
    <property type="match status" value="1"/>
</dbReference>
<protein>
    <recommendedName>
        <fullName evidence="1">Ferrochelatase</fullName>
        <ecNumber evidence="1">4.98.1.1</ecNumber>
    </recommendedName>
    <alternativeName>
        <fullName evidence="1">Heme synthase</fullName>
    </alternativeName>
    <alternativeName>
        <fullName evidence="1">Protoheme ferro-lyase</fullName>
    </alternativeName>
</protein>
<feature type="chain" id="PRO_1000019330" description="Ferrochelatase">
    <location>
        <begin position="1"/>
        <end position="345"/>
    </location>
</feature>
<feature type="binding site" evidence="1">
    <location>
        <position position="215"/>
    </location>
    <ligand>
        <name>Fe cation</name>
        <dbReference type="ChEBI" id="CHEBI:24875"/>
    </ligand>
</feature>
<feature type="binding site" evidence="1">
    <location>
        <position position="296"/>
    </location>
    <ligand>
        <name>Fe cation</name>
        <dbReference type="ChEBI" id="CHEBI:24875"/>
    </ligand>
</feature>
<gene>
    <name evidence="1" type="primary">hemH</name>
    <name type="ordered locus">Nham_3415</name>
</gene>
<evidence type="ECO:0000255" key="1">
    <source>
        <dbReference type="HAMAP-Rule" id="MF_00323"/>
    </source>
</evidence>
<name>HEMH_NITHX</name>
<reference key="1">
    <citation type="submission" date="2006-03" db="EMBL/GenBank/DDBJ databases">
        <title>Complete sequence of chromosome of Nitrobacter hamburgensis X14.</title>
        <authorList>
            <consortium name="US DOE Joint Genome Institute"/>
            <person name="Copeland A."/>
            <person name="Lucas S."/>
            <person name="Lapidus A."/>
            <person name="Barry K."/>
            <person name="Detter J.C."/>
            <person name="Glavina del Rio T."/>
            <person name="Hammon N."/>
            <person name="Israni S."/>
            <person name="Dalin E."/>
            <person name="Tice H."/>
            <person name="Pitluck S."/>
            <person name="Chain P."/>
            <person name="Malfatti S."/>
            <person name="Shin M."/>
            <person name="Vergez L."/>
            <person name="Schmutz J."/>
            <person name="Larimer F."/>
            <person name="Land M."/>
            <person name="Hauser L."/>
            <person name="Kyrpides N."/>
            <person name="Ivanova N."/>
            <person name="Ward B."/>
            <person name="Arp D."/>
            <person name="Klotz M."/>
            <person name="Stein L."/>
            <person name="O'Mullan G."/>
            <person name="Starkenburg S."/>
            <person name="Sayavedra L."/>
            <person name="Poret-Peterson A.T."/>
            <person name="Gentry M.E."/>
            <person name="Bruce D."/>
            <person name="Richardson P."/>
        </authorList>
    </citation>
    <scope>NUCLEOTIDE SEQUENCE [LARGE SCALE GENOMIC DNA]</scope>
    <source>
        <strain>DSM 10229 / NCIMB 13809 / X14</strain>
    </source>
</reference>